<geneLocation type="chloroplast"/>
<name>PSBA_CONCI</name>
<sequence length="353" mass="38764">MTATLERRESASIWGRFCNWVTSTENRLYIGWFGVLMIPTLLTATSVFIIAFIAAPPVDIDGIREPVSGSLLYGNNIISGAIIPTSAAIGLHFYPIWEAASVDEWLYNGGPYEIIVLHFLLGVACYMGREWELSYRLGMRPWIAVAYSAPVAAATAVFLIYPIGQGSFSDGMPLGISGTFNFMIVFQAEHNILMHPFHMLGVAGVFGGSLFSAMHGSLVTSSLIRETTENESANAGYKFGQEEETYNIVAAHGYFGRLIFQYASFNNSRSLHFFLAAWPVVGIWFTALGISTMAFNLNGFNFNQSVVDSQGRVINTWADIINRANLGMEVMHERNAHNFPLDLAAVEAPAVNG</sequence>
<evidence type="ECO:0000255" key="1">
    <source>
        <dbReference type="HAMAP-Rule" id="MF_01379"/>
    </source>
</evidence>
<dbReference type="EC" id="1.10.3.9" evidence="1"/>
<dbReference type="EMBL" id="AB020574">
    <property type="protein sequence ID" value="BAA82757.1"/>
    <property type="molecule type" value="Genomic_DNA"/>
</dbReference>
<dbReference type="EMBL" id="AB020575">
    <property type="protein sequence ID" value="BAA82758.1"/>
    <property type="molecule type" value="Genomic_DNA"/>
</dbReference>
<dbReference type="EMBL" id="AB020576">
    <property type="protein sequence ID" value="BAA82759.1"/>
    <property type="molecule type" value="Genomic_DNA"/>
</dbReference>
<dbReference type="EMBL" id="AB020578">
    <property type="protein sequence ID" value="BAA82761.1"/>
    <property type="molecule type" value="Genomic_DNA"/>
</dbReference>
<dbReference type="EMBL" id="AB020579">
    <property type="protein sequence ID" value="BAA82762.1"/>
    <property type="molecule type" value="Genomic_DNA"/>
</dbReference>
<dbReference type="EMBL" id="AB020580">
    <property type="protein sequence ID" value="BAA82763.1"/>
    <property type="molecule type" value="Genomic_DNA"/>
</dbReference>
<dbReference type="EMBL" id="AB020582">
    <property type="protein sequence ID" value="BAA82765.1"/>
    <property type="molecule type" value="Genomic_DNA"/>
</dbReference>
<dbReference type="EMBL" id="AB020583">
    <property type="protein sequence ID" value="BAA82766.1"/>
    <property type="molecule type" value="Genomic_DNA"/>
</dbReference>
<dbReference type="EMBL" id="AB020585">
    <property type="protein sequence ID" value="BAA82768.1"/>
    <property type="molecule type" value="Genomic_DNA"/>
</dbReference>
<dbReference type="EMBL" id="AB020586">
    <property type="protein sequence ID" value="BAA82769.1"/>
    <property type="molecule type" value="Genomic_DNA"/>
</dbReference>
<dbReference type="EMBL" id="AB020588">
    <property type="protein sequence ID" value="BAA82771.1"/>
    <property type="molecule type" value="Genomic_DNA"/>
</dbReference>
<dbReference type="EMBL" id="AB020589">
    <property type="protein sequence ID" value="BAA82772.1"/>
    <property type="molecule type" value="Genomic_DNA"/>
</dbReference>
<dbReference type="EMBL" id="AB020602">
    <property type="protein sequence ID" value="BAA82773.1"/>
    <property type="molecule type" value="Genomic_DNA"/>
</dbReference>
<dbReference type="EMBL" id="AB020603">
    <property type="protein sequence ID" value="BAA82774.1"/>
    <property type="molecule type" value="Genomic_DNA"/>
</dbReference>
<dbReference type="EMBL" id="AB020604">
    <property type="protein sequence ID" value="BAA82775.2"/>
    <property type="molecule type" value="Genomic_DNA"/>
</dbReference>
<dbReference type="EMBL" id="AB020605">
    <property type="protein sequence ID" value="BAA82776.2"/>
    <property type="molecule type" value="Genomic_DNA"/>
</dbReference>
<dbReference type="EMBL" id="AB020606">
    <property type="protein sequence ID" value="BAA82777.1"/>
    <property type="molecule type" value="Genomic_DNA"/>
</dbReference>
<dbReference type="EMBL" id="AB020607">
    <property type="protein sequence ID" value="BAA82778.1"/>
    <property type="molecule type" value="Genomic_DNA"/>
</dbReference>
<dbReference type="EMBL" id="AB020619">
    <property type="protein sequence ID" value="BAA82779.1"/>
    <property type="molecule type" value="Genomic_DNA"/>
</dbReference>
<dbReference type="EMBL" id="AB020620">
    <property type="protein sequence ID" value="BAA82780.1"/>
    <property type="molecule type" value="Genomic_DNA"/>
</dbReference>
<dbReference type="SMR" id="Q9T351"/>
<dbReference type="GO" id="GO:0009535">
    <property type="term" value="C:chloroplast thylakoid membrane"/>
    <property type="evidence" value="ECO:0007669"/>
    <property type="project" value="UniProtKB-SubCell"/>
</dbReference>
<dbReference type="GO" id="GO:0009523">
    <property type="term" value="C:photosystem II"/>
    <property type="evidence" value="ECO:0007669"/>
    <property type="project" value="UniProtKB-KW"/>
</dbReference>
<dbReference type="GO" id="GO:0016168">
    <property type="term" value="F:chlorophyll binding"/>
    <property type="evidence" value="ECO:0007669"/>
    <property type="project" value="UniProtKB-UniRule"/>
</dbReference>
<dbReference type="GO" id="GO:0045156">
    <property type="term" value="F:electron transporter, transferring electrons within the cyclic electron transport pathway of photosynthesis activity"/>
    <property type="evidence" value="ECO:0007669"/>
    <property type="project" value="InterPro"/>
</dbReference>
<dbReference type="GO" id="GO:0005506">
    <property type="term" value="F:iron ion binding"/>
    <property type="evidence" value="ECO:0007669"/>
    <property type="project" value="UniProtKB-UniRule"/>
</dbReference>
<dbReference type="GO" id="GO:0016682">
    <property type="term" value="F:oxidoreductase activity, acting on diphenols and related substances as donors, oxygen as acceptor"/>
    <property type="evidence" value="ECO:0007669"/>
    <property type="project" value="UniProtKB-UniRule"/>
</dbReference>
<dbReference type="GO" id="GO:0010242">
    <property type="term" value="F:oxygen evolving activity"/>
    <property type="evidence" value="ECO:0007669"/>
    <property type="project" value="UniProtKB-EC"/>
</dbReference>
<dbReference type="GO" id="GO:0009772">
    <property type="term" value="P:photosynthetic electron transport in photosystem II"/>
    <property type="evidence" value="ECO:0007669"/>
    <property type="project" value="InterPro"/>
</dbReference>
<dbReference type="GO" id="GO:0009635">
    <property type="term" value="P:response to herbicide"/>
    <property type="evidence" value="ECO:0007669"/>
    <property type="project" value="UniProtKB-KW"/>
</dbReference>
<dbReference type="CDD" id="cd09289">
    <property type="entry name" value="Photosystem-II_D1"/>
    <property type="match status" value="1"/>
</dbReference>
<dbReference type="FunFam" id="1.20.85.10:FF:000002">
    <property type="entry name" value="Photosystem II protein D1"/>
    <property type="match status" value="1"/>
</dbReference>
<dbReference type="Gene3D" id="1.20.85.10">
    <property type="entry name" value="Photosystem II protein D1-like"/>
    <property type="match status" value="1"/>
</dbReference>
<dbReference type="HAMAP" id="MF_01379">
    <property type="entry name" value="PSII_PsbA_D1"/>
    <property type="match status" value="1"/>
</dbReference>
<dbReference type="InterPro" id="IPR055266">
    <property type="entry name" value="D1/D2"/>
</dbReference>
<dbReference type="InterPro" id="IPR036854">
    <property type="entry name" value="Photo_II_D1/D2_sf"/>
</dbReference>
<dbReference type="InterPro" id="IPR000484">
    <property type="entry name" value="Photo_RC_L/M"/>
</dbReference>
<dbReference type="InterPro" id="IPR055265">
    <property type="entry name" value="Photo_RC_L/M_CS"/>
</dbReference>
<dbReference type="InterPro" id="IPR005867">
    <property type="entry name" value="PSII_D1"/>
</dbReference>
<dbReference type="NCBIfam" id="TIGR01151">
    <property type="entry name" value="psbA"/>
    <property type="match status" value="1"/>
</dbReference>
<dbReference type="PANTHER" id="PTHR33149:SF12">
    <property type="entry name" value="PHOTOSYSTEM II D2 PROTEIN"/>
    <property type="match status" value="1"/>
</dbReference>
<dbReference type="PANTHER" id="PTHR33149">
    <property type="entry name" value="PHOTOSYSTEM II PROTEIN D1"/>
    <property type="match status" value="1"/>
</dbReference>
<dbReference type="Pfam" id="PF00124">
    <property type="entry name" value="Photo_RC"/>
    <property type="match status" value="1"/>
</dbReference>
<dbReference type="PRINTS" id="PR00256">
    <property type="entry name" value="REACTNCENTRE"/>
</dbReference>
<dbReference type="SUPFAM" id="SSF81483">
    <property type="entry name" value="Bacterial photosystem II reaction centre, L and M subunits"/>
    <property type="match status" value="1"/>
</dbReference>
<dbReference type="PROSITE" id="PS00244">
    <property type="entry name" value="REACTION_CENTER"/>
    <property type="match status" value="1"/>
</dbReference>
<accession>Q9T351</accession>
<accession>Q9S734</accession>
<accession>Q9T352</accession>
<accession>Q9TNF9</accession>
<accession>Q9TNG0</accession>
<accession>Q9TNG1</accession>
<reference key="1">
    <citation type="journal article" date="2001" name="Genes Genet. Syst.">
        <title>Phylogenetic relationships among taxa of the liverwort Conocephalum conicum (Conocephalaceae) revealed by psbA sequence.</title>
        <authorList>
            <person name="Ki H.N."/>
            <person name="Nitasaka E."/>
            <person name="Odrzykoski I.J."/>
            <person name="Yamazak T."/>
        </authorList>
    </citation>
    <scope>NUCLEOTIDE SEQUENCE [GENOMIC DNA]</scope>
    <source>
        <strain>A</strain>
        <strain>B</strain>
        <strain>C</strain>
        <strain>FS</strain>
        <strain>J</strain>
        <strain>KYT</strain>
        <strain>S</strain>
        <strain>T</strain>
        <strain>YFS</strain>
        <tissue>Thallus</tissue>
    </source>
</reference>
<keyword id="KW-0007">Acetylation</keyword>
<keyword id="KW-0106">Calcium</keyword>
<keyword id="KW-0148">Chlorophyll</keyword>
<keyword id="KW-0150">Chloroplast</keyword>
<keyword id="KW-0157">Chromophore</keyword>
<keyword id="KW-0249">Electron transport</keyword>
<keyword id="KW-0359">Herbicide resistance</keyword>
<keyword id="KW-0408">Iron</keyword>
<keyword id="KW-0460">Magnesium</keyword>
<keyword id="KW-0464">Manganese</keyword>
<keyword id="KW-0472">Membrane</keyword>
<keyword id="KW-0479">Metal-binding</keyword>
<keyword id="KW-0560">Oxidoreductase</keyword>
<keyword id="KW-0597">Phosphoprotein</keyword>
<keyword id="KW-0602">Photosynthesis</keyword>
<keyword id="KW-0604">Photosystem II</keyword>
<keyword id="KW-0934">Plastid</keyword>
<keyword id="KW-0793">Thylakoid</keyword>
<keyword id="KW-0812">Transmembrane</keyword>
<keyword id="KW-1133">Transmembrane helix</keyword>
<keyword id="KW-0813">Transport</keyword>
<comment type="function">
    <text evidence="1">Photosystem II (PSII) is a light-driven water:plastoquinone oxidoreductase that uses light energy to abstract electrons from H(2)O, generating O(2) and a proton gradient subsequently used for ATP formation. It consists of a core antenna complex that captures photons, and an electron transfer chain that converts photonic excitation into a charge separation. The D1/D2 (PsbA/PsbD) reaction center heterodimer binds P680, the primary electron donor of PSII as well as several subsequent electron acceptors.</text>
</comment>
<comment type="catalytic activity">
    <reaction evidence="1">
        <text>2 a plastoquinone + 4 hnu + 2 H2O = 2 a plastoquinol + O2</text>
        <dbReference type="Rhea" id="RHEA:36359"/>
        <dbReference type="Rhea" id="RHEA-COMP:9561"/>
        <dbReference type="Rhea" id="RHEA-COMP:9562"/>
        <dbReference type="ChEBI" id="CHEBI:15377"/>
        <dbReference type="ChEBI" id="CHEBI:15379"/>
        <dbReference type="ChEBI" id="CHEBI:17757"/>
        <dbReference type="ChEBI" id="CHEBI:30212"/>
        <dbReference type="ChEBI" id="CHEBI:62192"/>
        <dbReference type="EC" id="1.10.3.9"/>
    </reaction>
</comment>
<comment type="cofactor">
    <text evidence="1">The D1/D2 heterodimer binds P680, chlorophylls that are the primary electron donor of PSII, and subsequent electron acceptors. It shares a non-heme iron and each subunit binds pheophytin, quinone, additional chlorophylls, carotenoids and lipids. D1 provides most of the ligands for the Mn4-Ca-O5 cluster of the oxygen-evolving complex (OEC). There is also a Cl(-1) ion associated with D1 and D2, which is required for oxygen evolution. The PSII complex binds additional chlorophylls, carotenoids and specific lipids.</text>
</comment>
<comment type="subunit">
    <text evidence="1">PSII is composed of 1 copy each of membrane proteins PsbA, PsbB, PsbC, PsbD, PsbE, PsbF, PsbH, PsbI, PsbJ, PsbK, PsbL, PsbM, PsbT, PsbX, PsbY, PsbZ, Psb30/Ycf12, at least 3 peripheral proteins of the oxygen-evolving complex and a large number of cofactors. It forms dimeric complexes.</text>
</comment>
<comment type="subcellular location">
    <subcellularLocation>
        <location evidence="1">Plastid</location>
        <location evidence="1">Chloroplast thylakoid membrane</location>
        <topology evidence="1">Multi-pass membrane protein</topology>
    </subcellularLocation>
</comment>
<comment type="PTM">
    <text evidence="1">Tyr-161 forms a radical intermediate that is referred to as redox-active TyrZ, YZ or Y-Z.</text>
</comment>
<comment type="PTM">
    <text evidence="1">C-terminally processed by CTPA; processing is essential to allow assembly of the oxygen-evolving complex and thus photosynthetic growth.</text>
</comment>
<comment type="miscellaneous">
    <text evidence="1">2 of the reaction center chlorophylls (ChlD1 and ChlD2) are entirely coordinated by water.</text>
</comment>
<comment type="miscellaneous">
    <text evidence="1">Herbicides such as atrazine, BNT, diuron or ioxynil bind in the Q(B) binding site and block subsequent electron transfer.</text>
</comment>
<comment type="similarity">
    <text evidence="1">Belongs to the reaction center PufL/M/PsbA/D family.</text>
</comment>
<protein>
    <recommendedName>
        <fullName evidence="1">Photosystem II protein D1</fullName>
        <shortName evidence="1">PSII D1 protein</shortName>
        <ecNumber evidence="1">1.10.3.9</ecNumber>
    </recommendedName>
    <alternativeName>
        <fullName evidence="1">Photosystem II Q(B) protein</fullName>
    </alternativeName>
</protein>
<proteinExistence type="inferred from homology"/>
<organism>
    <name type="scientific">Conocephalum conicum</name>
    <name type="common">Snakeskin liverwort</name>
    <name type="synonym">Marchantia conica</name>
    <dbReference type="NCBI Taxonomy" id="41839"/>
    <lineage>
        <taxon>Eukaryota</taxon>
        <taxon>Viridiplantae</taxon>
        <taxon>Streptophyta</taxon>
        <taxon>Embryophyta</taxon>
        <taxon>Marchantiophyta</taxon>
        <taxon>Marchantiopsida</taxon>
        <taxon>Marchantiidae</taxon>
        <taxon>Marchantiales</taxon>
        <taxon>Conocephalaceae</taxon>
        <taxon>Conocephalum</taxon>
    </lineage>
</organism>
<feature type="initiator methionine" description="Removed" evidence="1">
    <location>
        <position position="1"/>
    </location>
</feature>
<feature type="chain" id="PRO_0000090433" description="Photosystem II protein D1" evidence="1">
    <location>
        <begin position="2"/>
        <end position="344"/>
    </location>
</feature>
<feature type="propeptide" id="PRO_0000316446" evidence="1">
    <location>
        <begin position="345"/>
        <end position="353"/>
    </location>
</feature>
<feature type="transmembrane region" description="Helical" evidence="1">
    <location>
        <begin position="29"/>
        <end position="46"/>
    </location>
</feature>
<feature type="transmembrane region" description="Helical" evidence="1">
    <location>
        <begin position="118"/>
        <end position="133"/>
    </location>
</feature>
<feature type="transmembrane region" description="Helical" evidence="1">
    <location>
        <begin position="142"/>
        <end position="156"/>
    </location>
</feature>
<feature type="transmembrane region" description="Helical" evidence="1">
    <location>
        <begin position="197"/>
        <end position="218"/>
    </location>
</feature>
<feature type="transmembrane region" description="Helical" evidence="1">
    <location>
        <begin position="274"/>
        <end position="288"/>
    </location>
</feature>
<feature type="binding site" description="axial binding residue" evidence="1">
    <location>
        <position position="118"/>
    </location>
    <ligand>
        <name>chlorophyll a</name>
        <dbReference type="ChEBI" id="CHEBI:58416"/>
        <label>ChlzD1</label>
    </ligand>
    <ligandPart>
        <name>Mg</name>
        <dbReference type="ChEBI" id="CHEBI:25107"/>
    </ligandPart>
</feature>
<feature type="binding site" evidence="1">
    <location>
        <position position="126"/>
    </location>
    <ligand>
        <name>pheophytin a</name>
        <dbReference type="ChEBI" id="CHEBI:136840"/>
        <label>D1</label>
    </ligand>
</feature>
<feature type="binding site" evidence="1">
    <location>
        <position position="170"/>
    </location>
    <ligand>
        <name>[CaMn4O5] cluster</name>
        <dbReference type="ChEBI" id="CHEBI:189552"/>
    </ligand>
</feature>
<feature type="binding site" evidence="1">
    <location>
        <position position="189"/>
    </location>
    <ligand>
        <name>[CaMn4O5] cluster</name>
        <dbReference type="ChEBI" id="CHEBI:189552"/>
    </ligand>
</feature>
<feature type="binding site" description="axial binding residue" evidence="1">
    <location>
        <position position="198"/>
    </location>
    <ligand>
        <name>chlorophyll a</name>
        <dbReference type="ChEBI" id="CHEBI:58416"/>
        <label>PD1</label>
    </ligand>
    <ligandPart>
        <name>Mg</name>
        <dbReference type="ChEBI" id="CHEBI:25107"/>
    </ligandPart>
</feature>
<feature type="binding site" evidence="1">
    <location>
        <position position="215"/>
    </location>
    <ligand>
        <name>a quinone</name>
        <dbReference type="ChEBI" id="CHEBI:132124"/>
        <label>B</label>
    </ligand>
</feature>
<feature type="binding site" evidence="1">
    <location>
        <position position="215"/>
    </location>
    <ligand>
        <name>Fe cation</name>
        <dbReference type="ChEBI" id="CHEBI:24875"/>
        <note>ligand shared with heterodimeric partner</note>
    </ligand>
</feature>
<feature type="binding site" evidence="1">
    <location>
        <begin position="264"/>
        <end position="265"/>
    </location>
    <ligand>
        <name>a quinone</name>
        <dbReference type="ChEBI" id="CHEBI:132124"/>
        <label>B</label>
    </ligand>
</feature>
<feature type="binding site" evidence="1">
    <location>
        <position position="272"/>
    </location>
    <ligand>
        <name>Fe cation</name>
        <dbReference type="ChEBI" id="CHEBI:24875"/>
        <note>ligand shared with heterodimeric partner</note>
    </ligand>
</feature>
<feature type="binding site" evidence="1">
    <location>
        <position position="332"/>
    </location>
    <ligand>
        <name>[CaMn4O5] cluster</name>
        <dbReference type="ChEBI" id="CHEBI:189552"/>
    </ligand>
</feature>
<feature type="binding site" evidence="1">
    <location>
        <position position="333"/>
    </location>
    <ligand>
        <name>[CaMn4O5] cluster</name>
        <dbReference type="ChEBI" id="CHEBI:189552"/>
    </ligand>
</feature>
<feature type="binding site" evidence="1">
    <location>
        <position position="342"/>
    </location>
    <ligand>
        <name>[CaMn4O5] cluster</name>
        <dbReference type="ChEBI" id="CHEBI:189552"/>
    </ligand>
</feature>
<feature type="binding site" evidence="1">
    <location>
        <position position="344"/>
    </location>
    <ligand>
        <name>[CaMn4O5] cluster</name>
        <dbReference type="ChEBI" id="CHEBI:189552"/>
    </ligand>
</feature>
<feature type="site" description="Tyrosine radical intermediate" evidence="1">
    <location>
        <position position="161"/>
    </location>
</feature>
<feature type="site" description="Stabilizes free radical intermediate" evidence="1">
    <location>
        <position position="190"/>
    </location>
</feature>
<feature type="site" description="Cleavage; by CTPA" evidence="1">
    <location>
        <begin position="344"/>
        <end position="345"/>
    </location>
</feature>
<feature type="modified residue" description="N-acetylthreonine" evidence="1">
    <location>
        <position position="2"/>
    </location>
</feature>
<feature type="modified residue" description="Phosphothreonine" evidence="1">
    <location>
        <position position="2"/>
    </location>
</feature>
<feature type="sequence variant" description="In strain: YFS.">
    <original>Y</original>
    <variation>N</variation>
    <location>
        <position position="29"/>
    </location>
</feature>
<feature type="sequence variant" description="In strain: YFS.">
    <original>A</original>
    <variation>T</variation>
    <location>
        <position position="276"/>
    </location>
</feature>
<feature type="sequence variant">
    <original>G</original>
    <variation>S</variation>
    <location>
        <position position="282"/>
    </location>
</feature>
<feature type="sequence variant" description="In strain: KYT.">
    <original>S</original>
    <variation>N</variation>
    <location>
        <position position="291"/>
    </location>
</feature>
<feature type="sequence variant" description="In strain: KYT.">
    <original>A</original>
    <variation>G</variation>
    <location>
        <position position="294"/>
    </location>
</feature>
<gene>
    <name evidence="1" type="primary">psbA</name>
</gene>